<proteinExistence type="evidence at protein level"/>
<reference key="1">
    <citation type="journal article" date="1985" name="J. Biochem.">
        <title>Fibrinopeptides A and B of Japanese monkey (Macaca fuscata) and patas monkey (Erythrocebus patas): their amino acid sequences, restricted mutations, and a molecular phylogeny for macaques, guenons, and baboons.</title>
        <authorList>
            <person name="Nakamura S."/>
            <person name="Takenaka O."/>
            <person name="Takahashi K."/>
        </authorList>
    </citation>
    <scope>PROTEIN SEQUENCE</scope>
</reference>
<feature type="peptide" id="PRO_0000009067" description="Fibrinopeptide B">
    <location>
        <begin position="1"/>
        <end position="9"/>
    </location>
</feature>
<feature type="non-terminal residue">
    <location>
        <position position="9"/>
    </location>
</feature>
<protein>
    <recommendedName>
        <fullName>Fibrinogen beta chain</fullName>
    </recommendedName>
    <component>
        <recommendedName>
            <fullName>Fibrinopeptide B</fullName>
        </recommendedName>
    </component>
</protein>
<dbReference type="PIR" id="D24180">
    <property type="entry name" value="D24180"/>
</dbReference>
<dbReference type="GO" id="GO:0005576">
    <property type="term" value="C:extracellular region"/>
    <property type="evidence" value="ECO:0007669"/>
    <property type="project" value="UniProtKB-SubCell"/>
</dbReference>
<dbReference type="GO" id="GO:0002250">
    <property type="term" value="P:adaptive immune response"/>
    <property type="evidence" value="ECO:0007669"/>
    <property type="project" value="UniProtKB-KW"/>
</dbReference>
<dbReference type="GO" id="GO:0007596">
    <property type="term" value="P:blood coagulation"/>
    <property type="evidence" value="ECO:0007669"/>
    <property type="project" value="UniProtKB-KW"/>
</dbReference>
<dbReference type="GO" id="GO:0045087">
    <property type="term" value="P:innate immune response"/>
    <property type="evidence" value="ECO:0007669"/>
    <property type="project" value="UniProtKB-KW"/>
</dbReference>
<keyword id="KW-1064">Adaptive immunity</keyword>
<keyword id="KW-0094">Blood coagulation</keyword>
<keyword id="KW-0175">Coiled coil</keyword>
<keyword id="KW-0903">Direct protein sequencing</keyword>
<keyword id="KW-1015">Disulfide bond</keyword>
<keyword id="KW-0356">Hemostasis</keyword>
<keyword id="KW-0391">Immunity</keyword>
<keyword id="KW-0399">Innate immunity</keyword>
<keyword id="KW-0964">Secreted</keyword>
<evidence type="ECO:0000250" key="1">
    <source>
        <dbReference type="UniProtKB" id="E9PV24"/>
    </source>
</evidence>
<evidence type="ECO:0000250" key="2">
    <source>
        <dbReference type="UniProtKB" id="P02675"/>
    </source>
</evidence>
<organism>
    <name type="scientific">Erythrocebus patas</name>
    <name type="common">Red guenon</name>
    <name type="synonym">Cercopithecus patas</name>
    <dbReference type="NCBI Taxonomy" id="9538"/>
    <lineage>
        <taxon>Eukaryota</taxon>
        <taxon>Metazoa</taxon>
        <taxon>Chordata</taxon>
        <taxon>Craniata</taxon>
        <taxon>Vertebrata</taxon>
        <taxon>Euteleostomi</taxon>
        <taxon>Mammalia</taxon>
        <taxon>Eutheria</taxon>
        <taxon>Euarchontoglires</taxon>
        <taxon>Primates</taxon>
        <taxon>Haplorrhini</taxon>
        <taxon>Catarrhini</taxon>
        <taxon>Cercopithecidae</taxon>
        <taxon>Cercopithecinae</taxon>
        <taxon>Erythrocebus</taxon>
    </lineage>
</organism>
<comment type="function">
    <text evidence="1">Cleaved by the protease thrombin to yield monomers which, together with fibrinogen alpha (FGA) and fibrinogen gamma (FGG), polymerize to form an insoluble fibrin matrix. Fibrin has a major function in hemostasis as one of the primary components of blood clots. In addition, functions during the early stages of wound repair to stabilize the lesion and guide cell migration during re-epithelialization. Was originally thought to be essential for platelet aggregation, based on in vitro studies using anticoagulated blood. However subsequent studies have shown that it is not absolutely required for thrombus formation in vivo. Enhances expression of SELP in activated platelets. Maternal fibrinogen is essential for successful pregnancy. Fibrin deposition is also associated with infection, where it protects against IFNG-mediated hemorrhage. May also facilitate the antibacterial immune response via both innate and T-cell mediated pathways.</text>
</comment>
<comment type="subunit">
    <text evidence="2">Heterohexamer; disulfide linked. Contains 2 sets of 3 non-identical chains (alpha, beta and gamma). The 2 heterotrimers are in head to head conformation with the N-termini in a small central domain (By similarity).</text>
</comment>
<comment type="subcellular location">
    <subcellularLocation>
        <location>Secreted</location>
    </subcellularLocation>
</comment>
<comment type="domain">
    <text evidence="2">A long coiled coil structure formed by 3 polypeptide chains connects the central nodule to the C-terminal domains (distal nodules). The long C-terminal ends of the alpha chains fold back, contributing a fourth strand to the coiled coil structure.</text>
</comment>
<comment type="PTM">
    <text>Conversion of fibrinogen to fibrin is triggered by thrombin, which cleaves fibrinopeptides A and B from alpha and beta chains, and thus exposes the N-terminal polymerization sites responsible for the formation of the soft clot.</text>
</comment>
<accession>P19346</accession>
<gene>
    <name type="primary">FGB</name>
</gene>
<sequence>NEEVLFGGR</sequence>
<name>FIBB_ERYPA</name>